<comment type="function">
    <text evidence="1">Involved in pre-60S ribosomal particles maturation by promoting the nuclear export of the 60S ribosome.</text>
</comment>
<comment type="subunit">
    <text evidence="1">Associates with pre-60S ribosomal particles; released from the pre-60S particle very early in the cytoplasm.</text>
</comment>
<comment type="subcellular location">
    <subcellularLocation>
        <location evidence="1">Nucleus</location>
    </subcellularLocation>
    <subcellularLocation>
        <location evidence="1">Cytoplasm</location>
    </subcellularLocation>
    <text evidence="1">Shuttles between the nucleus and the cytoplasm.</text>
</comment>
<comment type="similarity">
    <text evidence="3">Belongs to the ZNF593/BUD20 C2H2-type zinc-finger protein family.</text>
</comment>
<reference key="1">
    <citation type="journal article" date="2002" name="Nature">
        <title>Sequence and analysis of chromosome 2 of Dictyostelium discoideum.</title>
        <authorList>
            <person name="Gloeckner G."/>
            <person name="Eichinger L."/>
            <person name="Szafranski K."/>
            <person name="Pachebat J.A."/>
            <person name="Bankier A.T."/>
            <person name="Dear P.H."/>
            <person name="Lehmann R."/>
            <person name="Baumgart C."/>
            <person name="Parra G."/>
            <person name="Abril J.F."/>
            <person name="Guigo R."/>
            <person name="Kumpf K."/>
            <person name="Tunggal B."/>
            <person name="Cox E.C."/>
            <person name="Quail M.A."/>
            <person name="Platzer M."/>
            <person name="Rosenthal A."/>
            <person name="Noegel A.A."/>
        </authorList>
    </citation>
    <scope>NUCLEOTIDE SEQUENCE [LARGE SCALE GENOMIC DNA]</scope>
    <source>
        <strain>AX4</strain>
    </source>
</reference>
<reference key="2">
    <citation type="journal article" date="2005" name="Nature">
        <title>The genome of the social amoeba Dictyostelium discoideum.</title>
        <authorList>
            <person name="Eichinger L."/>
            <person name="Pachebat J.A."/>
            <person name="Gloeckner G."/>
            <person name="Rajandream M.A."/>
            <person name="Sucgang R."/>
            <person name="Berriman M."/>
            <person name="Song J."/>
            <person name="Olsen R."/>
            <person name="Szafranski K."/>
            <person name="Xu Q."/>
            <person name="Tunggal B."/>
            <person name="Kummerfeld S."/>
            <person name="Madera M."/>
            <person name="Konfortov B.A."/>
            <person name="Rivero F."/>
            <person name="Bankier A.T."/>
            <person name="Lehmann R."/>
            <person name="Hamlin N."/>
            <person name="Davies R."/>
            <person name="Gaudet P."/>
            <person name="Fey P."/>
            <person name="Pilcher K."/>
            <person name="Chen G."/>
            <person name="Saunders D."/>
            <person name="Sodergren E.J."/>
            <person name="Davis P."/>
            <person name="Kerhornou A."/>
            <person name="Nie X."/>
            <person name="Hall N."/>
            <person name="Anjard C."/>
            <person name="Hemphill L."/>
            <person name="Bason N."/>
            <person name="Farbrother P."/>
            <person name="Desany B."/>
            <person name="Just E."/>
            <person name="Morio T."/>
            <person name="Rost R."/>
            <person name="Churcher C.M."/>
            <person name="Cooper J."/>
            <person name="Haydock S."/>
            <person name="van Driessche N."/>
            <person name="Cronin A."/>
            <person name="Goodhead I."/>
            <person name="Muzny D.M."/>
            <person name="Mourier T."/>
            <person name="Pain A."/>
            <person name="Lu M."/>
            <person name="Harper D."/>
            <person name="Lindsay R."/>
            <person name="Hauser H."/>
            <person name="James K.D."/>
            <person name="Quiles M."/>
            <person name="Madan Babu M."/>
            <person name="Saito T."/>
            <person name="Buchrieser C."/>
            <person name="Wardroper A."/>
            <person name="Felder M."/>
            <person name="Thangavelu M."/>
            <person name="Johnson D."/>
            <person name="Knights A."/>
            <person name="Loulseged H."/>
            <person name="Mungall K.L."/>
            <person name="Oliver K."/>
            <person name="Price C."/>
            <person name="Quail M.A."/>
            <person name="Urushihara H."/>
            <person name="Hernandez J."/>
            <person name="Rabbinowitsch E."/>
            <person name="Steffen D."/>
            <person name="Sanders M."/>
            <person name="Ma J."/>
            <person name="Kohara Y."/>
            <person name="Sharp S."/>
            <person name="Simmonds M.N."/>
            <person name="Spiegler S."/>
            <person name="Tivey A."/>
            <person name="Sugano S."/>
            <person name="White B."/>
            <person name="Walker D."/>
            <person name="Woodward J.R."/>
            <person name="Winckler T."/>
            <person name="Tanaka Y."/>
            <person name="Shaulsky G."/>
            <person name="Schleicher M."/>
            <person name="Weinstock G.M."/>
            <person name="Rosenthal A."/>
            <person name="Cox E.C."/>
            <person name="Chisholm R.L."/>
            <person name="Gibbs R.A."/>
            <person name="Loomis W.F."/>
            <person name="Platzer M."/>
            <person name="Kay R.R."/>
            <person name="Williams J.G."/>
            <person name="Dear P.H."/>
            <person name="Noegel A.A."/>
            <person name="Barrell B.G."/>
            <person name="Kuspa A."/>
        </authorList>
    </citation>
    <scope>NUCLEOTIDE SEQUENCE [LARGE SCALE GENOMIC DNA]</scope>
    <source>
        <strain>AX4</strain>
    </source>
</reference>
<gene>
    <name type="ORF">DDB_G0275351</name>
</gene>
<name>ZN593_DICDI</name>
<protein>
    <recommendedName>
        <fullName>Zinc finger protein 593 homolog</fullName>
    </recommendedName>
</protein>
<accession>Q553S1</accession>
<sequence>MGRYSGHGGTHTKKKQYKRARSTKNRAKDIDQIFDEIQPETIDKFSKFEVDPDLPGMGQNYCIHCSKHFVTNEDLQSHIKGKPHKIRVKELKTKPYSLAESQIPVDNGVKLNRDANGVPTTTDVTGTIKKSTTTTTTTTTV</sequence>
<dbReference type="EMBL" id="AAFI02000013">
    <property type="protein sequence ID" value="EAL69741.1"/>
    <property type="molecule type" value="Genomic_DNA"/>
</dbReference>
<dbReference type="RefSeq" id="XP_643671.1">
    <property type="nucleotide sequence ID" value="XM_638579.1"/>
</dbReference>
<dbReference type="SMR" id="Q553S1"/>
<dbReference type="FunCoup" id="Q553S1">
    <property type="interactions" value="363"/>
</dbReference>
<dbReference type="STRING" id="44689.Q553S1"/>
<dbReference type="PaxDb" id="44689-DDB0202563"/>
<dbReference type="EnsemblProtists" id="EAL69741">
    <property type="protein sequence ID" value="EAL69741"/>
    <property type="gene ID" value="DDB_G0275351"/>
</dbReference>
<dbReference type="GeneID" id="8619937"/>
<dbReference type="KEGG" id="ddi:DDB_G0275351"/>
<dbReference type="dictyBase" id="DDB_G0275351"/>
<dbReference type="VEuPathDB" id="AmoebaDB:DDB_G0275351"/>
<dbReference type="eggNOG" id="KOG3408">
    <property type="taxonomic scope" value="Eukaryota"/>
</dbReference>
<dbReference type="HOGENOM" id="CLU_1731431_0_0_1"/>
<dbReference type="InParanoid" id="Q553S1"/>
<dbReference type="OMA" id="MKDHFRS"/>
<dbReference type="PhylomeDB" id="Q553S1"/>
<dbReference type="PRO" id="PR:Q553S1"/>
<dbReference type="Proteomes" id="UP000002195">
    <property type="component" value="Chromosome 2"/>
</dbReference>
<dbReference type="GO" id="GO:0005737">
    <property type="term" value="C:cytoplasm"/>
    <property type="evidence" value="ECO:0007669"/>
    <property type="project" value="UniProtKB-SubCell"/>
</dbReference>
<dbReference type="GO" id="GO:0005634">
    <property type="term" value="C:nucleus"/>
    <property type="evidence" value="ECO:0007669"/>
    <property type="project" value="UniProtKB-SubCell"/>
</dbReference>
<dbReference type="GO" id="GO:0003676">
    <property type="term" value="F:nucleic acid binding"/>
    <property type="evidence" value="ECO:0007669"/>
    <property type="project" value="InterPro"/>
</dbReference>
<dbReference type="GO" id="GO:0008270">
    <property type="term" value="F:zinc ion binding"/>
    <property type="evidence" value="ECO:0007669"/>
    <property type="project" value="UniProtKB-KW"/>
</dbReference>
<dbReference type="GO" id="GO:0042254">
    <property type="term" value="P:ribosome biogenesis"/>
    <property type="evidence" value="ECO:0007669"/>
    <property type="project" value="UniProtKB-KW"/>
</dbReference>
<dbReference type="FunFam" id="3.30.160.60:FF:000299">
    <property type="entry name" value="Zinc finger protein 593"/>
    <property type="match status" value="1"/>
</dbReference>
<dbReference type="Gene3D" id="3.30.160.60">
    <property type="entry name" value="Classic Zinc Finger"/>
    <property type="match status" value="1"/>
</dbReference>
<dbReference type="InterPro" id="IPR051879">
    <property type="entry name" value="C2H2-ZF_Maturation_Protein"/>
</dbReference>
<dbReference type="InterPro" id="IPR003604">
    <property type="entry name" value="Matrin/U1-like-C_Znf_C2H2"/>
</dbReference>
<dbReference type="InterPro" id="IPR022755">
    <property type="entry name" value="Znf_C2H2_jaz"/>
</dbReference>
<dbReference type="InterPro" id="IPR036236">
    <property type="entry name" value="Znf_C2H2_sf"/>
</dbReference>
<dbReference type="InterPro" id="IPR013087">
    <property type="entry name" value="Znf_C2H2_type"/>
</dbReference>
<dbReference type="PANTHER" id="PTHR46095">
    <property type="entry name" value="ZINC FINGER PROTEIN 593"/>
    <property type="match status" value="1"/>
</dbReference>
<dbReference type="PANTHER" id="PTHR46095:SF1">
    <property type="entry name" value="ZINC FINGER PROTEIN 593"/>
    <property type="match status" value="1"/>
</dbReference>
<dbReference type="Pfam" id="PF12171">
    <property type="entry name" value="zf-C2H2_jaz"/>
    <property type="match status" value="1"/>
</dbReference>
<dbReference type="SMART" id="SM00451">
    <property type="entry name" value="ZnF_U1"/>
    <property type="match status" value="1"/>
</dbReference>
<dbReference type="SUPFAM" id="SSF57667">
    <property type="entry name" value="beta-beta-alpha zinc fingers"/>
    <property type="match status" value="1"/>
</dbReference>
<dbReference type="PROSITE" id="PS00028">
    <property type="entry name" value="ZINC_FINGER_C2H2_1"/>
    <property type="match status" value="1"/>
</dbReference>
<organism>
    <name type="scientific">Dictyostelium discoideum</name>
    <name type="common">Social amoeba</name>
    <dbReference type="NCBI Taxonomy" id="44689"/>
    <lineage>
        <taxon>Eukaryota</taxon>
        <taxon>Amoebozoa</taxon>
        <taxon>Evosea</taxon>
        <taxon>Eumycetozoa</taxon>
        <taxon>Dictyostelia</taxon>
        <taxon>Dictyosteliales</taxon>
        <taxon>Dictyosteliaceae</taxon>
        <taxon>Dictyostelium</taxon>
    </lineage>
</organism>
<feature type="chain" id="PRO_0000331298" description="Zinc finger protein 593 homolog">
    <location>
        <begin position="1"/>
        <end position="141"/>
    </location>
</feature>
<feature type="zinc finger region" description="C2H2-type">
    <location>
        <begin position="60"/>
        <end position="84"/>
    </location>
</feature>
<feature type="region of interest" description="Disordered" evidence="2">
    <location>
        <begin position="1"/>
        <end position="32"/>
    </location>
</feature>
<feature type="compositionally biased region" description="Basic residues" evidence="2">
    <location>
        <begin position="10"/>
        <end position="25"/>
    </location>
</feature>
<keyword id="KW-0963">Cytoplasm</keyword>
<keyword id="KW-0479">Metal-binding</keyword>
<keyword id="KW-0539">Nucleus</keyword>
<keyword id="KW-1185">Reference proteome</keyword>
<keyword id="KW-0690">Ribosome biogenesis</keyword>
<keyword id="KW-0862">Zinc</keyword>
<keyword id="KW-0863">Zinc-finger</keyword>
<proteinExistence type="inferred from homology"/>
<evidence type="ECO:0000250" key="1">
    <source>
        <dbReference type="UniProtKB" id="Q08004"/>
    </source>
</evidence>
<evidence type="ECO:0000256" key="2">
    <source>
        <dbReference type="SAM" id="MobiDB-lite"/>
    </source>
</evidence>
<evidence type="ECO:0000305" key="3"/>